<protein>
    <recommendedName>
        <fullName evidence="1">Large ribosomal subunit protein bL32</fullName>
    </recommendedName>
    <alternativeName>
        <fullName evidence="3">50S ribosomal protein L32</fullName>
    </alternativeName>
</protein>
<reference key="1">
    <citation type="submission" date="2007-04" db="EMBL/GenBank/DDBJ databases">
        <title>Complete sequence of Pseudomonas mendocina ymp.</title>
        <authorList>
            <consortium name="US DOE Joint Genome Institute"/>
            <person name="Copeland A."/>
            <person name="Lucas S."/>
            <person name="Lapidus A."/>
            <person name="Barry K."/>
            <person name="Glavina del Rio T."/>
            <person name="Dalin E."/>
            <person name="Tice H."/>
            <person name="Pitluck S."/>
            <person name="Kiss H."/>
            <person name="Brettin T."/>
            <person name="Detter J.C."/>
            <person name="Bruce D."/>
            <person name="Han C."/>
            <person name="Schmutz J."/>
            <person name="Larimer F."/>
            <person name="Land M."/>
            <person name="Hauser L."/>
            <person name="Kyrpides N."/>
            <person name="Mikhailova N."/>
            <person name="Hersman L."/>
            <person name="Dubois J."/>
            <person name="Maurice P."/>
            <person name="Richardson P."/>
        </authorList>
    </citation>
    <scope>NUCLEOTIDE SEQUENCE [LARGE SCALE GENOMIC DNA]</scope>
    <source>
        <strain>ymp</strain>
    </source>
</reference>
<keyword id="KW-0687">Ribonucleoprotein</keyword>
<keyword id="KW-0689">Ribosomal protein</keyword>
<accession>A4XSS3</accession>
<proteinExistence type="inferred from homology"/>
<gene>
    <name evidence="1" type="primary">rpmF</name>
    <name type="ordered locus">Pmen_1625</name>
</gene>
<organism>
    <name type="scientific">Ectopseudomonas mendocina (strain ymp)</name>
    <name type="common">Pseudomonas mendocina</name>
    <dbReference type="NCBI Taxonomy" id="399739"/>
    <lineage>
        <taxon>Bacteria</taxon>
        <taxon>Pseudomonadati</taxon>
        <taxon>Pseudomonadota</taxon>
        <taxon>Gammaproteobacteria</taxon>
        <taxon>Pseudomonadales</taxon>
        <taxon>Pseudomonadaceae</taxon>
        <taxon>Ectopseudomonas</taxon>
    </lineage>
</organism>
<comment type="similarity">
    <text evidence="1">Belongs to the bacterial ribosomal protein bL32 family.</text>
</comment>
<feature type="chain" id="PRO_1000005070" description="Large ribosomal subunit protein bL32">
    <location>
        <begin position="1"/>
        <end position="60"/>
    </location>
</feature>
<feature type="region of interest" description="Disordered" evidence="2">
    <location>
        <begin position="1"/>
        <end position="60"/>
    </location>
</feature>
<feature type="compositionally biased region" description="Basic and acidic residues" evidence="2">
    <location>
        <begin position="11"/>
        <end position="22"/>
    </location>
</feature>
<name>RL32_ECTM1</name>
<evidence type="ECO:0000255" key="1">
    <source>
        <dbReference type="HAMAP-Rule" id="MF_00340"/>
    </source>
</evidence>
<evidence type="ECO:0000256" key="2">
    <source>
        <dbReference type="SAM" id="MobiDB-lite"/>
    </source>
</evidence>
<evidence type="ECO:0000305" key="3"/>
<sequence length="60" mass="6743">MAVQQNKKSRSARDMRRSHDALEASTLSVEKSTGEVHLRHHVSPEGVYRGRKVIDKGADE</sequence>
<dbReference type="EMBL" id="CP000680">
    <property type="protein sequence ID" value="ABP84389.1"/>
    <property type="molecule type" value="Genomic_DNA"/>
</dbReference>
<dbReference type="SMR" id="A4XSS3"/>
<dbReference type="STRING" id="399739.Pmen_1625"/>
<dbReference type="KEGG" id="pmy:Pmen_1625"/>
<dbReference type="eggNOG" id="COG0333">
    <property type="taxonomic scope" value="Bacteria"/>
</dbReference>
<dbReference type="HOGENOM" id="CLU_129084_2_1_6"/>
<dbReference type="OrthoDB" id="9801927at2"/>
<dbReference type="GO" id="GO:0015934">
    <property type="term" value="C:large ribosomal subunit"/>
    <property type="evidence" value="ECO:0007669"/>
    <property type="project" value="InterPro"/>
</dbReference>
<dbReference type="GO" id="GO:0003735">
    <property type="term" value="F:structural constituent of ribosome"/>
    <property type="evidence" value="ECO:0007669"/>
    <property type="project" value="InterPro"/>
</dbReference>
<dbReference type="GO" id="GO:0006412">
    <property type="term" value="P:translation"/>
    <property type="evidence" value="ECO:0007669"/>
    <property type="project" value="UniProtKB-UniRule"/>
</dbReference>
<dbReference type="HAMAP" id="MF_00340">
    <property type="entry name" value="Ribosomal_bL32"/>
    <property type="match status" value="1"/>
</dbReference>
<dbReference type="InterPro" id="IPR002677">
    <property type="entry name" value="Ribosomal_bL32"/>
</dbReference>
<dbReference type="InterPro" id="IPR044957">
    <property type="entry name" value="Ribosomal_bL32_bact"/>
</dbReference>
<dbReference type="InterPro" id="IPR011332">
    <property type="entry name" value="Ribosomal_zn-bd"/>
</dbReference>
<dbReference type="NCBIfam" id="TIGR01031">
    <property type="entry name" value="rpmF_bact"/>
    <property type="match status" value="1"/>
</dbReference>
<dbReference type="PANTHER" id="PTHR35534">
    <property type="entry name" value="50S RIBOSOMAL PROTEIN L32"/>
    <property type="match status" value="1"/>
</dbReference>
<dbReference type="PANTHER" id="PTHR35534:SF1">
    <property type="entry name" value="LARGE RIBOSOMAL SUBUNIT PROTEIN BL32"/>
    <property type="match status" value="1"/>
</dbReference>
<dbReference type="Pfam" id="PF01783">
    <property type="entry name" value="Ribosomal_L32p"/>
    <property type="match status" value="1"/>
</dbReference>
<dbReference type="SUPFAM" id="SSF57829">
    <property type="entry name" value="Zn-binding ribosomal proteins"/>
    <property type="match status" value="1"/>
</dbReference>